<gene>
    <name type="primary">MAF1</name>
</gene>
<evidence type="ECO:0000250" key="1"/>
<evidence type="ECO:0000256" key="2">
    <source>
        <dbReference type="SAM" id="MobiDB-lite"/>
    </source>
</evidence>
<evidence type="ECO:0000269" key="3">
    <source>
    </source>
</evidence>
<evidence type="ECO:0000269" key="4">
    <source>
    </source>
</evidence>
<evidence type="ECO:0000269" key="5">
    <source>
    </source>
</evidence>
<organism>
    <name type="scientific">Solanum lycopersicum</name>
    <name type="common">Tomato</name>
    <name type="synonym">Lycopersicon esculentum</name>
    <dbReference type="NCBI Taxonomy" id="4081"/>
    <lineage>
        <taxon>Eukaryota</taxon>
        <taxon>Viridiplantae</taxon>
        <taxon>Streptophyta</taxon>
        <taxon>Embryophyta</taxon>
        <taxon>Tracheophyta</taxon>
        <taxon>Spermatophyta</taxon>
        <taxon>Magnoliopsida</taxon>
        <taxon>eudicotyledons</taxon>
        <taxon>Gunneridae</taxon>
        <taxon>Pentapetalae</taxon>
        <taxon>asterids</taxon>
        <taxon>lamiids</taxon>
        <taxon>Solanales</taxon>
        <taxon>Solanaceae</taxon>
        <taxon>Solanoideae</taxon>
        <taxon>Solaneae</taxon>
        <taxon>Solanum</taxon>
        <taxon>Solanum subgen. Lycopersicon</taxon>
    </lineage>
</organism>
<name>MAF1_SOLLC</name>
<accession>Q9M7N6</accession>
<protein>
    <recommendedName>
        <fullName>MFP1 attachment factor 1</fullName>
    </recommendedName>
</protein>
<reference key="1">
    <citation type="journal article" date="1999" name="Plant Cell">
        <title>MAF1, a novel plant protein interacting with matrix attachment region binding protein MFP1, is located at the nuclear envelope.</title>
        <authorList>
            <person name="Gindullis F."/>
            <person name="Peffer N.J."/>
            <person name="Meier I."/>
        </authorList>
    </citation>
    <scope>NUCLEOTIDE SEQUENCE [MRNA]</scope>
    <scope>SUBCELLULAR LOCATION</scope>
    <scope>TISSUE SPECIFICITY</scope>
    <scope>INTERACTION WITH MFP1</scope>
    <source>
        <strain>cv. VFNT Cherry</strain>
    </source>
</reference>
<reference key="2">
    <citation type="journal article" date="2002" name="BMC Genomics">
        <title>Four signature motifs define the first class of structurally related large coiled-coil proteins in plants.</title>
        <authorList>
            <person name="Gindullis F."/>
            <person name="Rose A."/>
            <person name="Patel S."/>
            <person name="Meier I."/>
        </authorList>
    </citation>
    <scope>INTERACTION WITH FPP</scope>
</reference>
<reference key="3">
    <citation type="journal article" date="2005" name="Planta">
        <title>The plant nuclear envelope protein MAF1 has an additional location at the Golgi and binds to a novel Golgi-associated coiled-coil protein.</title>
        <authorList>
            <person name="Patel S."/>
            <person name="Brkljacic J."/>
            <person name="Gindullis F."/>
            <person name="Rose A."/>
            <person name="Meier I."/>
        </authorList>
    </citation>
    <scope>INTERACTION WITH WAP</scope>
    <scope>SUBCELLULAR LOCATION</scope>
</reference>
<dbReference type="EMBL" id="AF118113">
    <property type="protein sequence ID" value="AAF63657.1"/>
    <property type="molecule type" value="mRNA"/>
</dbReference>
<dbReference type="RefSeq" id="NP_001234193.1">
    <property type="nucleotide sequence ID" value="NM_001247264.2"/>
</dbReference>
<dbReference type="SMR" id="Q9M7N6"/>
<dbReference type="FunCoup" id="Q9M7N6">
    <property type="interactions" value="2092"/>
</dbReference>
<dbReference type="IntAct" id="Q9M7N6">
    <property type="interactions" value="1"/>
</dbReference>
<dbReference type="STRING" id="4081.Q9M7N6"/>
<dbReference type="PaxDb" id="4081-Solyc04g078380.1.1"/>
<dbReference type="GeneID" id="543586"/>
<dbReference type="KEGG" id="sly:543586"/>
<dbReference type="eggNOG" id="ENOG502S3QB">
    <property type="taxonomic scope" value="Eukaryota"/>
</dbReference>
<dbReference type="HOGENOM" id="CLU_101563_1_1_1"/>
<dbReference type="InParanoid" id="Q9M7N6"/>
<dbReference type="OrthoDB" id="1927559at2759"/>
<dbReference type="PhylomeDB" id="Q9M7N6"/>
<dbReference type="Proteomes" id="UP000004994">
    <property type="component" value="Unplaced"/>
</dbReference>
<dbReference type="GO" id="GO:0005794">
    <property type="term" value="C:Golgi apparatus"/>
    <property type="evidence" value="ECO:0007669"/>
    <property type="project" value="UniProtKB-SubCell"/>
</dbReference>
<dbReference type="GO" id="GO:0005635">
    <property type="term" value="C:nuclear envelope"/>
    <property type="evidence" value="ECO:0007669"/>
    <property type="project" value="UniProtKB-SubCell"/>
</dbReference>
<dbReference type="GO" id="GO:0016363">
    <property type="term" value="C:nuclear matrix"/>
    <property type="evidence" value="ECO:0007669"/>
    <property type="project" value="UniProtKB-SubCell"/>
</dbReference>
<dbReference type="GO" id="GO:0048527">
    <property type="term" value="P:lateral root development"/>
    <property type="evidence" value="ECO:0007669"/>
    <property type="project" value="InterPro"/>
</dbReference>
<dbReference type="GO" id="GO:0000278">
    <property type="term" value="P:mitotic cell cycle"/>
    <property type="evidence" value="ECO:0007669"/>
    <property type="project" value="InterPro"/>
</dbReference>
<dbReference type="Gene3D" id="1.10.246.200">
    <property type="entry name" value="WPP domain"/>
    <property type="match status" value="1"/>
</dbReference>
<dbReference type="InterPro" id="IPR044692">
    <property type="entry name" value="WPP1/2/3"/>
</dbReference>
<dbReference type="InterPro" id="IPR025265">
    <property type="entry name" value="WPP_dom"/>
</dbReference>
<dbReference type="InterPro" id="IPR038214">
    <property type="entry name" value="WPP_sf"/>
</dbReference>
<dbReference type="PANTHER" id="PTHR34362">
    <property type="entry name" value="WPP DOMAIN-CONTAINING PROTEIN 1-RELATED"/>
    <property type="match status" value="1"/>
</dbReference>
<dbReference type="PANTHER" id="PTHR34362:SF1">
    <property type="entry name" value="WPP DOMAIN-CONTAINING PROTEIN 1-RELATED"/>
    <property type="match status" value="1"/>
</dbReference>
<dbReference type="Pfam" id="PF13943">
    <property type="entry name" value="WPP"/>
    <property type="match status" value="1"/>
</dbReference>
<feature type="chain" id="PRO_0000347190" description="MFP1 attachment factor 1">
    <location>
        <begin position="1"/>
        <end position="152"/>
    </location>
</feature>
<feature type="region of interest" description="Disordered" evidence="2">
    <location>
        <begin position="1"/>
        <end position="33"/>
    </location>
</feature>
<feature type="region of interest" description="WPP">
    <location>
        <begin position="12"/>
        <end position="115"/>
    </location>
</feature>
<feature type="region of interest" description="Disordered" evidence="2">
    <location>
        <begin position="107"/>
        <end position="152"/>
    </location>
</feature>
<feature type="compositionally biased region" description="Polar residues" evidence="2">
    <location>
        <begin position="134"/>
        <end position="152"/>
    </location>
</feature>
<proteinExistence type="evidence at protein level"/>
<sequence>MAEIDSAQSQETVTQETQNKPMTTSFSIWPPTQRTRDAVINRLIESLSTPSILSKRYGTLPQDEASETARLIEEEAFAAAGSTASDADDGIEILQVYSKEISKRMIDTVKSRSAPAAASEGESKPSELPADASEPSSASGLTGEVSSVETEP</sequence>
<keyword id="KW-0963">Cytoplasm</keyword>
<keyword id="KW-0333">Golgi apparatus</keyword>
<keyword id="KW-0539">Nucleus</keyword>
<keyword id="KW-1185">Reference proteome</keyword>
<comment type="subunit">
    <text evidence="3 4 5">Interacts with WAP through its WPP domain. Binds to MFP1 and FPP proteins.</text>
</comment>
<comment type="interaction">
    <interactant intactId="EBI-1112534">
        <id>Q9M7N6</id>
    </interactant>
    <interactant intactId="EBI-1112526">
        <id>P93203</id>
        <label>MFP1</label>
    </interactant>
    <organismsDiffer>false</organismsDiffer>
    <experiments>4</experiments>
</comment>
<comment type="subcellular location">
    <subcellularLocation>
        <location>Nucleus envelope</location>
    </subcellularLocation>
    <subcellularLocation>
        <location>Cytoplasm</location>
    </subcellularLocation>
    <subcellularLocation>
        <location>Golgi apparatus</location>
    </subcellularLocation>
    <subcellularLocation>
        <location>Nucleus</location>
    </subcellularLocation>
    <subcellularLocation>
        <location>Nucleus matrix</location>
    </subcellularLocation>
    <text>Associated with the immature cell plate during cytokinesis. Accumulate in speckles of the cytoplasm belonging to the Golgi apparatus.</text>
</comment>
<comment type="tissue specificity">
    <text evidence="3">Expressed in young tomato leaves, young fruits, and flowers (at protein level).</text>
</comment>
<comment type="domain">
    <text evidence="1">The WPP domain is required for the nuclear envelope localization.</text>
</comment>